<proteinExistence type="predicted"/>
<protein>
    <recommendedName>
        <fullName evidence="5">GRIP and coiled-coil domain-containing protein 2</fullName>
    </recommendedName>
</protein>
<accession>P34562</accession>
<accession>Q86DA2</accession>
<name>GCC2_CAEEL</name>
<organism>
    <name type="scientific">Caenorhabditis elegans</name>
    <dbReference type="NCBI Taxonomy" id="6239"/>
    <lineage>
        <taxon>Eukaryota</taxon>
        <taxon>Metazoa</taxon>
        <taxon>Ecdysozoa</taxon>
        <taxon>Nematoda</taxon>
        <taxon>Chromadorea</taxon>
        <taxon>Rhabditida</taxon>
        <taxon>Rhabditina</taxon>
        <taxon>Rhabditomorpha</taxon>
        <taxon>Rhabditoidea</taxon>
        <taxon>Rhabditidae</taxon>
        <taxon>Peloderinae</taxon>
        <taxon>Caenorhabditis</taxon>
    </lineage>
</organism>
<dbReference type="EMBL" id="Z27079">
    <property type="protein sequence ID" value="CAA81596.2"/>
    <property type="molecule type" value="Genomic_DNA"/>
</dbReference>
<dbReference type="EMBL" id="Z27079">
    <property type="protein sequence ID" value="CAD90180.1"/>
    <property type="molecule type" value="Genomic_DNA"/>
</dbReference>
<dbReference type="PIR" id="E88564">
    <property type="entry name" value="E88564"/>
</dbReference>
<dbReference type="PIR" id="S41009">
    <property type="entry name" value="S41009"/>
</dbReference>
<dbReference type="RefSeq" id="NP_001022748.1">
    <molecule id="P34562-1"/>
    <property type="nucleotide sequence ID" value="NM_001027577.4"/>
</dbReference>
<dbReference type="RefSeq" id="NP_001022749.1">
    <molecule id="P34562-2"/>
    <property type="nucleotide sequence ID" value="NM_001027578.5"/>
</dbReference>
<dbReference type="SMR" id="P34562"/>
<dbReference type="BioGRID" id="41573">
    <property type="interactions" value="5"/>
</dbReference>
<dbReference type="FunCoup" id="P34562">
    <property type="interactions" value="1402"/>
</dbReference>
<dbReference type="IntAct" id="P34562">
    <property type="interactions" value="2"/>
</dbReference>
<dbReference type="STRING" id="6239.T05G5.9a.1"/>
<dbReference type="iPTMnet" id="P34562"/>
<dbReference type="PaxDb" id="6239-T05G5.9a"/>
<dbReference type="PeptideAtlas" id="P34562"/>
<dbReference type="EnsemblMetazoa" id="T05G5.9a.1">
    <molecule id="P34562-1"/>
    <property type="protein sequence ID" value="T05G5.9a.1"/>
    <property type="gene ID" value="WBGene00011503"/>
</dbReference>
<dbReference type="EnsemblMetazoa" id="T05G5.9b.1">
    <molecule id="P34562-2"/>
    <property type="protein sequence ID" value="T05G5.9b.1"/>
    <property type="gene ID" value="WBGene00011503"/>
</dbReference>
<dbReference type="GeneID" id="176378"/>
<dbReference type="KEGG" id="cel:CELE_T05G5.9"/>
<dbReference type="UCSC" id="T05G5.9a">
    <molecule id="P34562-1"/>
    <property type="organism name" value="c. elegans"/>
</dbReference>
<dbReference type="AGR" id="WB:WBGene00011503"/>
<dbReference type="CTD" id="176378"/>
<dbReference type="WormBase" id="T05G5.9a">
    <molecule id="P34562-1"/>
    <property type="protein sequence ID" value="CE34088"/>
    <property type="gene ID" value="WBGene00011503"/>
    <property type="gene designation" value="gcc-2"/>
</dbReference>
<dbReference type="WormBase" id="T05G5.9b">
    <molecule id="P34562-2"/>
    <property type="protein sequence ID" value="CE34089"/>
    <property type="gene ID" value="WBGene00011503"/>
    <property type="gene designation" value="gcc-2"/>
</dbReference>
<dbReference type="eggNOG" id="ENOG502SAHV">
    <property type="taxonomic scope" value="Eukaryota"/>
</dbReference>
<dbReference type="GeneTree" id="ENSGT00940000153772"/>
<dbReference type="HOGENOM" id="CLU_027458_0_0_1"/>
<dbReference type="InParanoid" id="P34562"/>
<dbReference type="OMA" id="TEECDKQ"/>
<dbReference type="OrthoDB" id="1926336at2759"/>
<dbReference type="PhylomeDB" id="P34562"/>
<dbReference type="Reactome" id="R-CEL-6811440">
    <property type="pathway name" value="Retrograde transport at the Trans-Golgi-Network"/>
</dbReference>
<dbReference type="SignaLink" id="P34562"/>
<dbReference type="PRO" id="PR:P34562"/>
<dbReference type="Proteomes" id="UP000001940">
    <property type="component" value="Chromosome III"/>
</dbReference>
<dbReference type="Bgee" id="WBGene00011503">
    <property type="expression patterns" value="Expressed in adult organism and 4 other cell types or tissues"/>
</dbReference>
<dbReference type="GO" id="GO:0005794">
    <property type="term" value="C:Golgi apparatus"/>
    <property type="evidence" value="ECO:0000318"/>
    <property type="project" value="GO_Central"/>
</dbReference>
<dbReference type="InterPro" id="IPR032023">
    <property type="entry name" value="GCC2_Rab_bind"/>
</dbReference>
<dbReference type="InterPro" id="IPR051952">
    <property type="entry name" value="Golgi-autophagy_related"/>
</dbReference>
<dbReference type="InterPro" id="IPR000237">
    <property type="entry name" value="GRIP_dom"/>
</dbReference>
<dbReference type="PANTHER" id="PTHR23157">
    <property type="entry name" value="GRIP AND COILED-COIL DOMAIN-CONTAINING PROTEIN 1"/>
    <property type="match status" value="1"/>
</dbReference>
<dbReference type="PANTHER" id="PTHR23157:SF26">
    <property type="entry name" value="GRIP AND COILED-COIL DOMAIN-CONTAINING PROTEIN 2"/>
    <property type="match status" value="1"/>
</dbReference>
<dbReference type="Pfam" id="PF01465">
    <property type="entry name" value="GRIP"/>
    <property type="match status" value="1"/>
</dbReference>
<dbReference type="Pfam" id="PF16704">
    <property type="entry name" value="Rab_bind"/>
    <property type="match status" value="1"/>
</dbReference>
<dbReference type="SMART" id="SM00755">
    <property type="entry name" value="Grip"/>
    <property type="match status" value="1"/>
</dbReference>
<dbReference type="PROSITE" id="PS50913">
    <property type="entry name" value="GRIP"/>
    <property type="match status" value="1"/>
</dbReference>
<evidence type="ECO:0000255" key="1"/>
<evidence type="ECO:0000255" key="2">
    <source>
        <dbReference type="PROSITE-ProRule" id="PRU00250"/>
    </source>
</evidence>
<evidence type="ECO:0000256" key="3">
    <source>
        <dbReference type="SAM" id="MobiDB-lite"/>
    </source>
</evidence>
<evidence type="ECO:0000305" key="4"/>
<evidence type="ECO:0000312" key="5">
    <source>
        <dbReference type="WormBase" id="T05G5.9a"/>
    </source>
</evidence>
<gene>
    <name evidence="5" type="primary">gcc-2</name>
    <name evidence="5" type="ORF">T05G5.9</name>
</gene>
<feature type="chain" id="PRO_0000190077" description="GRIP and coiled-coil domain-containing protein 2" evidence="4">
    <location>
        <begin position="1"/>
        <end position="660"/>
    </location>
</feature>
<feature type="domain" description="GRIP" evidence="2">
    <location>
        <begin position="585"/>
        <end position="636"/>
    </location>
</feature>
<feature type="region of interest" description="Disordered" evidence="3">
    <location>
        <begin position="1"/>
        <end position="28"/>
    </location>
</feature>
<feature type="coiled-coil region" evidence="1">
    <location>
        <begin position="30"/>
        <end position="92"/>
    </location>
</feature>
<feature type="coiled-coil region" evidence="1">
    <location>
        <begin position="115"/>
        <end position="464"/>
    </location>
</feature>
<feature type="coiled-coil region" evidence="1">
    <location>
        <begin position="517"/>
        <end position="596"/>
    </location>
</feature>
<feature type="splice variant" id="VSP_009679" description="In isoform b." evidence="4">
    <location>
        <begin position="89"/>
        <end position="90"/>
    </location>
</feature>
<reference key="1">
    <citation type="journal article" date="1994" name="Nature">
        <title>2.2 Mb of contiguous nucleotide sequence from chromosome III of C. elegans.</title>
        <authorList>
            <person name="Wilson R."/>
            <person name="Ainscough R."/>
            <person name="Anderson K."/>
            <person name="Baynes C."/>
            <person name="Berks M."/>
            <person name="Bonfield J."/>
            <person name="Burton J."/>
            <person name="Connell M."/>
            <person name="Copsey T."/>
            <person name="Cooper J."/>
            <person name="Coulson A."/>
            <person name="Craxton M."/>
            <person name="Dear S."/>
            <person name="Du Z."/>
            <person name="Durbin R."/>
            <person name="Favello A."/>
            <person name="Fraser A."/>
            <person name="Fulton L."/>
            <person name="Gardner A."/>
            <person name="Green P."/>
            <person name="Hawkins T."/>
            <person name="Hillier L."/>
            <person name="Jier M."/>
            <person name="Johnston L."/>
            <person name="Jones M."/>
            <person name="Kershaw J."/>
            <person name="Kirsten J."/>
            <person name="Laisster N."/>
            <person name="Latreille P."/>
            <person name="Lightning J."/>
            <person name="Lloyd C."/>
            <person name="Mortimore B."/>
            <person name="O'Callaghan M."/>
            <person name="Parsons J."/>
            <person name="Percy C."/>
            <person name="Rifken L."/>
            <person name="Roopra A."/>
            <person name="Saunders D."/>
            <person name="Shownkeen R."/>
            <person name="Sims M."/>
            <person name="Smaldon N."/>
            <person name="Smith A."/>
            <person name="Smith M."/>
            <person name="Sonnhammer E."/>
            <person name="Staden R."/>
            <person name="Sulston J."/>
            <person name="Thierry-Mieg J."/>
            <person name="Thomas K."/>
            <person name="Vaudin M."/>
            <person name="Vaughan K."/>
            <person name="Waterston R."/>
            <person name="Watson A."/>
            <person name="Weinstock L."/>
            <person name="Wilkinson-Sproat J."/>
            <person name="Wohldman P."/>
        </authorList>
    </citation>
    <scope>NUCLEOTIDE SEQUENCE [LARGE SCALE GENOMIC DNA]</scope>
    <source>
        <strain>Bristol N2</strain>
    </source>
</reference>
<reference key="2">
    <citation type="journal article" date="1998" name="Science">
        <title>Genome sequence of the nematode C. elegans: a platform for investigating biology.</title>
        <authorList>
            <consortium name="The C. elegans sequencing consortium"/>
        </authorList>
    </citation>
    <scope>NUCLEOTIDE SEQUENCE [LARGE SCALE GENOMIC DNA]</scope>
    <scope>ALTERNATIVE SPLICING</scope>
    <source>
        <strain>Bristol N2</strain>
    </source>
</reference>
<sequence>MSAPESSISPVPPPGSSSGGGKKLDSLPKEDLVKFAKKQVAHVAEMKKNQTALMEKLKAKMSELEQVKKDAENLKLINEKLTTESAKKVENNPTECTECLSKSGALIELEKEVFEWKEKATRADMISLELRDLESKVDQLNRALRDKTEALIKAQEVITENDLEVNNMKKEKNNTKSSIEKLTEENTRLTKALQDEKIKSADFEARLRSAECRIVELSDQQGNEKLGLARKMAESENRGRILEEAVDVLKSENEKLLAKNEEFSAKLVSSEKEFAEFKKKSHFVLEKKGKQEDETRKAIEKLEKSKVTITELEQQADQTRQEHFKTVEDLASSRDKAERLEKTLKVLKSELTESEKAHTTAIDELQSSSSKLIQRLDEELRLMRSSRDTAEQKIKDIEIAKEKVDHLLQNERQRSENENGSLKSKLSSATKQIHSLEKELQELRNDFETRRIQSNQHQQQKAIAAVVPQPIQLPEHPIPPLHYQRPAVAPSDSVSCYDEPTQPDRSLEDVLYGDLGDEYRVESDELSEEKFKVILDQLENLKKTNHHVAELLSDAETANGRLTTQNSLLKDEIRRLEREEKREAELSNEKNMEYLKNVFVQFLKPESVPAERDQLVIVLQRVLHLSPKEVEILKAASAHMATAQAGSWSSYFSGWSGAAT</sequence>
<comment type="alternative products">
    <event type="alternative splicing"/>
    <isoform>
        <id>P34562-1</id>
        <name>a</name>
        <sequence type="displayed"/>
    </isoform>
    <isoform>
        <id>P34562-2</id>
        <name>b</name>
        <sequence type="described" ref="VSP_009679"/>
    </isoform>
</comment>
<keyword id="KW-0025">Alternative splicing</keyword>
<keyword id="KW-0175">Coiled coil</keyword>
<keyword id="KW-1185">Reference proteome</keyword>